<dbReference type="EC" id="2.4.99.17" evidence="1"/>
<dbReference type="EMBL" id="CP001019">
    <property type="protein sequence ID" value="ACJ18200.1"/>
    <property type="molecule type" value="Genomic_DNA"/>
</dbReference>
<dbReference type="RefSeq" id="WP_012569949.1">
    <property type="nucleotide sequence ID" value="NC_011527.1"/>
</dbReference>
<dbReference type="SMR" id="B6IZS2"/>
<dbReference type="KEGG" id="cbg:CbuG_0808"/>
<dbReference type="HOGENOM" id="CLU_039110_1_0_6"/>
<dbReference type="UniPathway" id="UPA00392"/>
<dbReference type="GO" id="GO:0005737">
    <property type="term" value="C:cytoplasm"/>
    <property type="evidence" value="ECO:0007669"/>
    <property type="project" value="UniProtKB-SubCell"/>
</dbReference>
<dbReference type="GO" id="GO:0051075">
    <property type="term" value="F:S-adenosylmethionine:tRNA ribosyltransferase-isomerase activity"/>
    <property type="evidence" value="ECO:0007669"/>
    <property type="project" value="UniProtKB-EC"/>
</dbReference>
<dbReference type="GO" id="GO:0008616">
    <property type="term" value="P:queuosine biosynthetic process"/>
    <property type="evidence" value="ECO:0007669"/>
    <property type="project" value="UniProtKB-UniRule"/>
</dbReference>
<dbReference type="GO" id="GO:0002099">
    <property type="term" value="P:tRNA wobble guanine modification"/>
    <property type="evidence" value="ECO:0007669"/>
    <property type="project" value="TreeGrafter"/>
</dbReference>
<dbReference type="FunFam" id="3.40.1780.10:FF:000001">
    <property type="entry name" value="S-adenosylmethionine:tRNA ribosyltransferase-isomerase"/>
    <property type="match status" value="1"/>
</dbReference>
<dbReference type="Gene3D" id="2.40.10.240">
    <property type="entry name" value="QueA-like"/>
    <property type="match status" value="1"/>
</dbReference>
<dbReference type="Gene3D" id="3.40.1780.10">
    <property type="entry name" value="QueA-like"/>
    <property type="match status" value="1"/>
</dbReference>
<dbReference type="HAMAP" id="MF_00113">
    <property type="entry name" value="QueA"/>
    <property type="match status" value="1"/>
</dbReference>
<dbReference type="InterPro" id="IPR003699">
    <property type="entry name" value="QueA"/>
</dbReference>
<dbReference type="InterPro" id="IPR042118">
    <property type="entry name" value="QueA_dom1"/>
</dbReference>
<dbReference type="InterPro" id="IPR042119">
    <property type="entry name" value="QueA_dom2"/>
</dbReference>
<dbReference type="InterPro" id="IPR036100">
    <property type="entry name" value="QueA_sf"/>
</dbReference>
<dbReference type="NCBIfam" id="NF001140">
    <property type="entry name" value="PRK00147.1"/>
    <property type="match status" value="1"/>
</dbReference>
<dbReference type="NCBIfam" id="TIGR00113">
    <property type="entry name" value="queA"/>
    <property type="match status" value="1"/>
</dbReference>
<dbReference type="PANTHER" id="PTHR30307">
    <property type="entry name" value="S-ADENOSYLMETHIONINE:TRNA RIBOSYLTRANSFERASE-ISOMERASE"/>
    <property type="match status" value="1"/>
</dbReference>
<dbReference type="PANTHER" id="PTHR30307:SF0">
    <property type="entry name" value="S-ADENOSYLMETHIONINE:TRNA RIBOSYLTRANSFERASE-ISOMERASE"/>
    <property type="match status" value="1"/>
</dbReference>
<dbReference type="Pfam" id="PF02547">
    <property type="entry name" value="Queuosine_synth"/>
    <property type="match status" value="1"/>
</dbReference>
<dbReference type="SUPFAM" id="SSF111337">
    <property type="entry name" value="QueA-like"/>
    <property type="match status" value="1"/>
</dbReference>
<sequence>MKNQWKTSDFDYNLPVELIAQRPLADRSGSRLLYIDRSRRTVSHRQFNGFVEQVKPNDLVVLNDTKVIPAGLFGHKQTGGKVECLVERILSKDRFLAHIRASKAPKLGSQIIIADNFKIIIEGRYNDLFECVLHSSASILDLLYQHGRIPLPPYIQREPDKDDQARYQTIFAERAGAVAAPTAGLHFNEETFDALRKKGAAITYVTLHVGAGTFQPVRADSLADHRMHHEWMEVSKAVCDAIAKCRKNNGRVIAVGTTVMRCLETATKNGECRPYAGETDLFIYPGFQFKCVDALLTNFHLPKSTLLMLVCAFGGYELVMEAYQKAVENRYRFFSYGDAMLIS</sequence>
<accession>B6IZS2</accession>
<reference key="1">
    <citation type="journal article" date="2009" name="Infect. Immun.">
        <title>Comparative genomics reveal extensive transposon-mediated genomic plasticity and diversity among potential effector proteins within the genus Coxiella.</title>
        <authorList>
            <person name="Beare P.A."/>
            <person name="Unsworth N."/>
            <person name="Andoh M."/>
            <person name="Voth D.E."/>
            <person name="Omsland A."/>
            <person name="Gilk S.D."/>
            <person name="Williams K.P."/>
            <person name="Sobral B.W."/>
            <person name="Kupko J.J. III"/>
            <person name="Porcella S.F."/>
            <person name="Samuel J.E."/>
            <person name="Heinzen R.A."/>
        </authorList>
    </citation>
    <scope>NUCLEOTIDE SEQUENCE [LARGE SCALE GENOMIC DNA]</scope>
    <source>
        <strain>CbuG_Q212</strain>
    </source>
</reference>
<proteinExistence type="inferred from homology"/>
<name>QUEA_COXB2</name>
<gene>
    <name evidence="1" type="primary">queA</name>
    <name type="ordered locus">CbuG_0808</name>
</gene>
<feature type="chain" id="PRO_1000094770" description="S-adenosylmethionine:tRNA ribosyltransferase-isomerase">
    <location>
        <begin position="1"/>
        <end position="343"/>
    </location>
</feature>
<keyword id="KW-0963">Cytoplasm</keyword>
<keyword id="KW-0671">Queuosine biosynthesis</keyword>
<keyword id="KW-0949">S-adenosyl-L-methionine</keyword>
<keyword id="KW-0808">Transferase</keyword>
<protein>
    <recommendedName>
        <fullName evidence="1">S-adenosylmethionine:tRNA ribosyltransferase-isomerase</fullName>
        <ecNumber evidence="1">2.4.99.17</ecNumber>
    </recommendedName>
    <alternativeName>
        <fullName evidence="1">Queuosine biosynthesis protein QueA</fullName>
    </alternativeName>
</protein>
<organism>
    <name type="scientific">Coxiella burnetii (strain CbuG_Q212)</name>
    <name type="common">Coxiella burnetii (strain Q212)</name>
    <dbReference type="NCBI Taxonomy" id="434923"/>
    <lineage>
        <taxon>Bacteria</taxon>
        <taxon>Pseudomonadati</taxon>
        <taxon>Pseudomonadota</taxon>
        <taxon>Gammaproteobacteria</taxon>
        <taxon>Legionellales</taxon>
        <taxon>Coxiellaceae</taxon>
        <taxon>Coxiella</taxon>
    </lineage>
</organism>
<evidence type="ECO:0000255" key="1">
    <source>
        <dbReference type="HAMAP-Rule" id="MF_00113"/>
    </source>
</evidence>
<comment type="function">
    <text evidence="1">Transfers and isomerizes the ribose moiety from AdoMet to the 7-aminomethyl group of 7-deazaguanine (preQ1-tRNA) to give epoxyqueuosine (oQ-tRNA).</text>
</comment>
<comment type="catalytic activity">
    <reaction evidence="1">
        <text>7-aminomethyl-7-carbaguanosine(34) in tRNA + S-adenosyl-L-methionine = epoxyqueuosine(34) in tRNA + adenine + L-methionine + 2 H(+)</text>
        <dbReference type="Rhea" id="RHEA:32155"/>
        <dbReference type="Rhea" id="RHEA-COMP:10342"/>
        <dbReference type="Rhea" id="RHEA-COMP:18582"/>
        <dbReference type="ChEBI" id="CHEBI:15378"/>
        <dbReference type="ChEBI" id="CHEBI:16708"/>
        <dbReference type="ChEBI" id="CHEBI:57844"/>
        <dbReference type="ChEBI" id="CHEBI:59789"/>
        <dbReference type="ChEBI" id="CHEBI:82833"/>
        <dbReference type="ChEBI" id="CHEBI:194443"/>
        <dbReference type="EC" id="2.4.99.17"/>
    </reaction>
</comment>
<comment type="pathway">
    <text evidence="1">tRNA modification; tRNA-queuosine biosynthesis.</text>
</comment>
<comment type="subunit">
    <text evidence="1">Monomer.</text>
</comment>
<comment type="subcellular location">
    <subcellularLocation>
        <location evidence="1">Cytoplasm</location>
    </subcellularLocation>
</comment>
<comment type="similarity">
    <text evidence="1">Belongs to the QueA family.</text>
</comment>